<name>YRAN_SHIF8</name>
<proteinExistence type="inferred from homology"/>
<sequence length="131" mass="14741">MATVPTRSGSPRQLTTKQTGDAWEAQARRWLEGKGLRFIAANVNERGGEIDLIMREGLTTVFVEVRYRRSALYGGAAASVTRSKQHKLLQTARLWLARHNGSFDTVDCRFDVVAFTGNEVEWIKDAFNDHS</sequence>
<organism>
    <name type="scientific">Shigella flexneri serotype 5b (strain 8401)</name>
    <dbReference type="NCBI Taxonomy" id="373384"/>
    <lineage>
        <taxon>Bacteria</taxon>
        <taxon>Pseudomonadati</taxon>
        <taxon>Pseudomonadota</taxon>
        <taxon>Gammaproteobacteria</taxon>
        <taxon>Enterobacterales</taxon>
        <taxon>Enterobacteriaceae</taxon>
        <taxon>Shigella</taxon>
    </lineage>
</organism>
<protein>
    <recommendedName>
        <fullName evidence="1">UPF0102 protein YraN</fullName>
    </recommendedName>
</protein>
<evidence type="ECO:0000255" key="1">
    <source>
        <dbReference type="HAMAP-Rule" id="MF_00048"/>
    </source>
</evidence>
<evidence type="ECO:0000256" key="2">
    <source>
        <dbReference type="SAM" id="MobiDB-lite"/>
    </source>
</evidence>
<reference key="1">
    <citation type="journal article" date="2006" name="BMC Genomics">
        <title>Complete genome sequence of Shigella flexneri 5b and comparison with Shigella flexneri 2a.</title>
        <authorList>
            <person name="Nie H."/>
            <person name="Yang F."/>
            <person name="Zhang X."/>
            <person name="Yang J."/>
            <person name="Chen L."/>
            <person name="Wang J."/>
            <person name="Xiong Z."/>
            <person name="Peng J."/>
            <person name="Sun L."/>
            <person name="Dong J."/>
            <person name="Xue Y."/>
            <person name="Xu X."/>
            <person name="Chen S."/>
            <person name="Yao Z."/>
            <person name="Shen Y."/>
            <person name="Jin Q."/>
        </authorList>
    </citation>
    <scope>NUCLEOTIDE SEQUENCE [LARGE SCALE GENOMIC DNA]</scope>
    <source>
        <strain>8401</strain>
    </source>
</reference>
<feature type="chain" id="PRO_1000009267" description="UPF0102 protein YraN">
    <location>
        <begin position="1"/>
        <end position="131"/>
    </location>
</feature>
<feature type="region of interest" description="Disordered" evidence="2">
    <location>
        <begin position="1"/>
        <end position="21"/>
    </location>
</feature>
<feature type="compositionally biased region" description="Polar residues" evidence="2">
    <location>
        <begin position="1"/>
        <end position="19"/>
    </location>
</feature>
<dbReference type="EMBL" id="CP000266">
    <property type="protein sequence ID" value="ABF05232.1"/>
    <property type="molecule type" value="Genomic_DNA"/>
</dbReference>
<dbReference type="RefSeq" id="WP_000246827.1">
    <property type="nucleotide sequence ID" value="NC_008258.1"/>
</dbReference>
<dbReference type="SMR" id="Q0T0D3"/>
<dbReference type="KEGG" id="sfv:SFV_3178"/>
<dbReference type="HOGENOM" id="CLU_115353_1_0_6"/>
<dbReference type="Proteomes" id="UP000000659">
    <property type="component" value="Chromosome"/>
</dbReference>
<dbReference type="GO" id="GO:0003676">
    <property type="term" value="F:nucleic acid binding"/>
    <property type="evidence" value="ECO:0007669"/>
    <property type="project" value="InterPro"/>
</dbReference>
<dbReference type="CDD" id="cd20736">
    <property type="entry name" value="PoNe_Nuclease"/>
    <property type="match status" value="1"/>
</dbReference>
<dbReference type="Gene3D" id="3.40.1350.10">
    <property type="match status" value="1"/>
</dbReference>
<dbReference type="HAMAP" id="MF_00048">
    <property type="entry name" value="UPF0102"/>
    <property type="match status" value="1"/>
</dbReference>
<dbReference type="InterPro" id="IPR011335">
    <property type="entry name" value="Restrct_endonuc-II-like"/>
</dbReference>
<dbReference type="InterPro" id="IPR011856">
    <property type="entry name" value="tRNA_endonuc-like_dom_sf"/>
</dbReference>
<dbReference type="InterPro" id="IPR003509">
    <property type="entry name" value="UPF0102_YraN-like"/>
</dbReference>
<dbReference type="NCBIfam" id="NF009150">
    <property type="entry name" value="PRK12497.1-3"/>
    <property type="match status" value="1"/>
</dbReference>
<dbReference type="NCBIfam" id="TIGR00252">
    <property type="entry name" value="YraN family protein"/>
    <property type="match status" value="1"/>
</dbReference>
<dbReference type="PANTHER" id="PTHR34039">
    <property type="entry name" value="UPF0102 PROTEIN YRAN"/>
    <property type="match status" value="1"/>
</dbReference>
<dbReference type="PANTHER" id="PTHR34039:SF1">
    <property type="entry name" value="UPF0102 PROTEIN YRAN"/>
    <property type="match status" value="1"/>
</dbReference>
<dbReference type="Pfam" id="PF02021">
    <property type="entry name" value="UPF0102"/>
    <property type="match status" value="1"/>
</dbReference>
<dbReference type="SUPFAM" id="SSF52980">
    <property type="entry name" value="Restriction endonuclease-like"/>
    <property type="match status" value="1"/>
</dbReference>
<accession>Q0T0D3</accession>
<gene>
    <name evidence="1" type="primary">yraN</name>
    <name type="ordered locus">SFV_3178</name>
</gene>
<comment type="similarity">
    <text evidence="1">Belongs to the UPF0102 family.</text>
</comment>